<protein>
    <recommendedName>
        <fullName>Uncharacterized protein HI_1236</fullName>
    </recommendedName>
</protein>
<proteinExistence type="predicted"/>
<organism>
    <name type="scientific">Haemophilus influenzae (strain ATCC 51907 / DSM 11121 / KW20 / Rd)</name>
    <dbReference type="NCBI Taxonomy" id="71421"/>
    <lineage>
        <taxon>Bacteria</taxon>
        <taxon>Pseudomonadati</taxon>
        <taxon>Pseudomonadota</taxon>
        <taxon>Gammaproteobacteria</taxon>
        <taxon>Pasteurellales</taxon>
        <taxon>Pasteurellaceae</taxon>
        <taxon>Haemophilus</taxon>
    </lineage>
</organism>
<accession>P44132</accession>
<comment type="subcellular location">
    <subcellularLocation>
        <location evidence="2">Membrane</location>
        <topology evidence="2">Single-pass membrane protein</topology>
    </subcellularLocation>
</comment>
<comment type="similarity">
    <text evidence="2">To E.coli YdgA and YihF.</text>
</comment>
<dbReference type="EMBL" id="L42023">
    <property type="protein sequence ID" value="AAC22888.1"/>
    <property type="molecule type" value="Genomic_DNA"/>
</dbReference>
<dbReference type="PIR" id="F64022">
    <property type="entry name" value="F64022"/>
</dbReference>
<dbReference type="STRING" id="71421.HI_1236"/>
<dbReference type="EnsemblBacteria" id="AAC22888">
    <property type="protein sequence ID" value="AAC22888"/>
    <property type="gene ID" value="HI_1236"/>
</dbReference>
<dbReference type="KEGG" id="hin:HI_1236"/>
<dbReference type="eggNOG" id="COG5339">
    <property type="taxonomic scope" value="Bacteria"/>
</dbReference>
<dbReference type="HOGENOM" id="CLU_753906_0_0_6"/>
<dbReference type="PhylomeDB" id="P44132"/>
<dbReference type="Proteomes" id="UP000000579">
    <property type="component" value="Chromosome"/>
</dbReference>
<dbReference type="GO" id="GO:0016020">
    <property type="term" value="C:membrane"/>
    <property type="evidence" value="ECO:0007669"/>
    <property type="project" value="UniProtKB-SubCell"/>
</dbReference>
<dbReference type="InterPro" id="IPR010352">
    <property type="entry name" value="DUF945"/>
</dbReference>
<dbReference type="Pfam" id="PF06097">
    <property type="entry name" value="DUF945"/>
    <property type="match status" value="1"/>
</dbReference>
<gene>
    <name type="ordered locus">HI_1236</name>
</gene>
<feature type="chain" id="PRO_0000078010" description="Uncharacterized protein HI_1236">
    <location>
        <begin position="1"/>
        <end position="367"/>
    </location>
</feature>
<feature type="transmembrane region" description="Helical" evidence="1">
    <location>
        <begin position="6"/>
        <end position="26"/>
    </location>
</feature>
<evidence type="ECO:0000255" key="1"/>
<evidence type="ECO:0000305" key="2"/>
<keyword id="KW-0472">Membrane</keyword>
<keyword id="KW-1185">Reference proteome</keyword>
<keyword id="KW-0812">Transmembrane</keyword>
<keyword id="KW-1133">Transmembrane helix</keyword>
<reference key="1">
    <citation type="journal article" date="1995" name="Science">
        <title>Whole-genome random sequencing and assembly of Haemophilus influenzae Rd.</title>
        <authorList>
            <person name="Fleischmann R.D."/>
            <person name="Adams M.D."/>
            <person name="White O."/>
            <person name="Clayton R.A."/>
            <person name="Kirkness E.F."/>
            <person name="Kerlavage A.R."/>
            <person name="Bult C.J."/>
            <person name="Tomb J.-F."/>
            <person name="Dougherty B.A."/>
            <person name="Merrick J.M."/>
            <person name="McKenney K."/>
            <person name="Sutton G.G."/>
            <person name="FitzHugh W."/>
            <person name="Fields C.A."/>
            <person name="Gocayne J.D."/>
            <person name="Scott J.D."/>
            <person name="Shirley R."/>
            <person name="Liu L.-I."/>
            <person name="Glodek A."/>
            <person name="Kelley J.M."/>
            <person name="Weidman J.F."/>
            <person name="Phillips C.A."/>
            <person name="Spriggs T."/>
            <person name="Hedblom E."/>
            <person name="Cotton M.D."/>
            <person name="Utterback T.R."/>
            <person name="Hanna M.C."/>
            <person name="Nguyen D.T."/>
            <person name="Saudek D.M."/>
            <person name="Brandon R.C."/>
            <person name="Fine L.D."/>
            <person name="Fritchman J.L."/>
            <person name="Fuhrmann J.L."/>
            <person name="Geoghagen N.S.M."/>
            <person name="Gnehm C.L."/>
            <person name="McDonald L.A."/>
            <person name="Small K.V."/>
            <person name="Fraser C.M."/>
            <person name="Smith H.O."/>
            <person name="Venter J.C."/>
        </authorList>
    </citation>
    <scope>NUCLEOTIDE SEQUENCE [LARGE SCALE GENOMIC DNA]</scope>
    <source>
        <strain>ATCC 51907 / DSM 11121 / KW20 / Rd</strain>
    </source>
</reference>
<sequence length="367" mass="41355">MKKSKIAAGVVVALAAVWCTSAWFTGKKAEEEYLYQLEQLNQLFTKTEALEESKIFYKNIKFERGLFASHIQDQIEIHKANETIIIPLSSTLYHGPLPLDRVAKLNFVPAIFSSQTLLGKNATTQAFFDITESEKPLQLNFAMNYSLSGNAELKLASGQYHNEQSKTDFDWSNVVLNIDLNQNTPNNYVLSVDTFNSNAPNHAVSTASSIKIKDLVVQGSLQSTKWPFIYSGNINSKIGYFEQNTESAESGEKFSLIQKNSQANLTTQVEGDTVNIINKTNLDELHINGNNLGKVTNNVEFNHIDGNALQELLNILVAIGKADSECLYLKHWCKNYNKQAWPLRIISLKLSLPLFLFLMKKAKWHWI</sequence>
<name>Y1236_HAEIN</name>